<feature type="chain" id="PRO_0000104589" description="Large ribosomal subunit protein uL30">
    <location>
        <begin position="1"/>
        <end position="55"/>
    </location>
</feature>
<feature type="strand" evidence="9">
    <location>
        <begin position="2"/>
        <end position="5"/>
    </location>
</feature>
<feature type="helix" evidence="9">
    <location>
        <begin position="14"/>
        <end position="22"/>
    </location>
</feature>
<feature type="strand" evidence="9">
    <location>
        <begin position="31"/>
        <end position="33"/>
    </location>
</feature>
<feature type="turn" evidence="9">
    <location>
        <begin position="38"/>
        <end position="40"/>
    </location>
</feature>
<feature type="helix" evidence="9">
    <location>
        <begin position="41"/>
        <end position="46"/>
    </location>
</feature>
<feature type="helix" evidence="9">
    <location>
        <begin position="48"/>
        <end position="50"/>
    </location>
</feature>
<feature type="strand" evidence="9">
    <location>
        <begin position="51"/>
        <end position="53"/>
    </location>
</feature>
<accession>Q9RSL0</accession>
<dbReference type="EMBL" id="AE000513">
    <property type="protein sequence ID" value="AAF11663.1"/>
    <property type="molecule type" value="Genomic_DNA"/>
</dbReference>
<dbReference type="PIR" id="E75314">
    <property type="entry name" value="E75314"/>
</dbReference>
<dbReference type="RefSeq" id="NP_295837.1">
    <property type="nucleotide sequence ID" value="NC_001263.1"/>
</dbReference>
<dbReference type="RefSeq" id="WP_010888745.1">
    <property type="nucleotide sequence ID" value="NZ_JMLF01000004.1"/>
</dbReference>
<dbReference type="PDB" id="1NKW">
    <property type="method" value="X-ray"/>
    <property type="resolution" value="3.10 A"/>
    <property type="chains" value="X=1-55"/>
</dbReference>
<dbReference type="PDB" id="1NWX">
    <property type="method" value="X-ray"/>
    <property type="resolution" value="3.50 A"/>
    <property type="chains" value="X=1-55"/>
</dbReference>
<dbReference type="PDB" id="1NWY">
    <property type="method" value="X-ray"/>
    <property type="resolution" value="3.30 A"/>
    <property type="chains" value="X=1-55"/>
</dbReference>
<dbReference type="PDB" id="1SM1">
    <property type="method" value="X-ray"/>
    <property type="resolution" value="3.42 A"/>
    <property type="chains" value="X=1-55"/>
</dbReference>
<dbReference type="PDB" id="1XBP">
    <property type="method" value="X-ray"/>
    <property type="resolution" value="3.50 A"/>
    <property type="chains" value="X=1-55"/>
</dbReference>
<dbReference type="PDB" id="2ZJP">
    <property type="method" value="X-ray"/>
    <property type="resolution" value="3.70 A"/>
    <property type="chains" value="W=1-55"/>
</dbReference>
<dbReference type="PDB" id="2ZJQ">
    <property type="method" value="X-ray"/>
    <property type="resolution" value="3.30 A"/>
    <property type="chains" value="W=1-55"/>
</dbReference>
<dbReference type="PDB" id="2ZJR">
    <property type="method" value="X-ray"/>
    <property type="resolution" value="2.91 A"/>
    <property type="chains" value="W=1-55"/>
</dbReference>
<dbReference type="PDB" id="3CF5">
    <property type="method" value="X-ray"/>
    <property type="resolution" value="3.30 A"/>
    <property type="chains" value="W=1-55"/>
</dbReference>
<dbReference type="PDB" id="3DLL">
    <property type="method" value="X-ray"/>
    <property type="resolution" value="3.50 A"/>
    <property type="chains" value="W=1-55"/>
</dbReference>
<dbReference type="PDB" id="3PIO">
    <property type="method" value="X-ray"/>
    <property type="resolution" value="3.25 A"/>
    <property type="chains" value="W=1-55"/>
</dbReference>
<dbReference type="PDB" id="3PIP">
    <property type="method" value="X-ray"/>
    <property type="resolution" value="3.45 A"/>
    <property type="chains" value="W=1-55"/>
</dbReference>
<dbReference type="PDB" id="4IO9">
    <property type="method" value="X-ray"/>
    <property type="resolution" value="3.20 A"/>
    <property type="chains" value="W=1-55"/>
</dbReference>
<dbReference type="PDB" id="4IOA">
    <property type="method" value="X-ray"/>
    <property type="resolution" value="3.20 A"/>
    <property type="chains" value="W=1-55"/>
</dbReference>
<dbReference type="PDB" id="4IOC">
    <property type="method" value="X-ray"/>
    <property type="resolution" value="3.60 A"/>
    <property type="chains" value="W=1-55"/>
</dbReference>
<dbReference type="PDB" id="4U67">
    <property type="method" value="X-ray"/>
    <property type="resolution" value="3.65 A"/>
    <property type="chains" value="W=1-55"/>
</dbReference>
<dbReference type="PDB" id="4V49">
    <property type="method" value="X-ray"/>
    <property type="resolution" value="8.70 A"/>
    <property type="chains" value="X=1-55"/>
</dbReference>
<dbReference type="PDB" id="4V4A">
    <property type="method" value="X-ray"/>
    <property type="resolution" value="9.50 A"/>
    <property type="chains" value="X=1-55"/>
</dbReference>
<dbReference type="PDB" id="4V4G">
    <property type="method" value="X-ray"/>
    <property type="resolution" value="11.50 A"/>
    <property type="chains" value="Z=1-55"/>
</dbReference>
<dbReference type="PDB" id="4WFN">
    <property type="method" value="X-ray"/>
    <property type="resolution" value="3.54 A"/>
    <property type="chains" value="W=1-55"/>
</dbReference>
<dbReference type="PDB" id="5DM6">
    <property type="method" value="X-ray"/>
    <property type="resolution" value="2.90 A"/>
    <property type="chains" value="W=1-55"/>
</dbReference>
<dbReference type="PDB" id="5DM7">
    <property type="method" value="X-ray"/>
    <property type="resolution" value="3.00 A"/>
    <property type="chains" value="W=1-55"/>
</dbReference>
<dbReference type="PDB" id="5JVG">
    <property type="method" value="X-ray"/>
    <property type="resolution" value="3.43 A"/>
    <property type="chains" value="W=1-55"/>
</dbReference>
<dbReference type="PDB" id="5JVH">
    <property type="method" value="X-ray"/>
    <property type="resolution" value="3.58 A"/>
    <property type="chains" value="W=1-55"/>
</dbReference>
<dbReference type="PDB" id="7A0R">
    <property type="method" value="X-ray"/>
    <property type="resolution" value="3.30 A"/>
    <property type="chains" value="W=1-55"/>
</dbReference>
<dbReference type="PDB" id="7A0S">
    <property type="method" value="X-ray"/>
    <property type="resolution" value="3.22 A"/>
    <property type="chains" value="W=1-55"/>
</dbReference>
<dbReference type="PDB" id="7A18">
    <property type="method" value="X-ray"/>
    <property type="resolution" value="3.40 A"/>
    <property type="chains" value="W=1-55"/>
</dbReference>
<dbReference type="PDBsum" id="1NKW"/>
<dbReference type="PDBsum" id="1NWX"/>
<dbReference type="PDBsum" id="1NWY"/>
<dbReference type="PDBsum" id="1SM1"/>
<dbReference type="PDBsum" id="1XBP"/>
<dbReference type="PDBsum" id="2ZJP"/>
<dbReference type="PDBsum" id="2ZJQ"/>
<dbReference type="PDBsum" id="2ZJR"/>
<dbReference type="PDBsum" id="3CF5"/>
<dbReference type="PDBsum" id="3DLL"/>
<dbReference type="PDBsum" id="3PIO"/>
<dbReference type="PDBsum" id="3PIP"/>
<dbReference type="PDBsum" id="4IO9"/>
<dbReference type="PDBsum" id="4IOA"/>
<dbReference type="PDBsum" id="4IOC"/>
<dbReference type="PDBsum" id="4U67"/>
<dbReference type="PDBsum" id="4V49"/>
<dbReference type="PDBsum" id="4V4A"/>
<dbReference type="PDBsum" id="4V4G"/>
<dbReference type="PDBsum" id="4WFN"/>
<dbReference type="PDBsum" id="5DM6"/>
<dbReference type="PDBsum" id="5DM7"/>
<dbReference type="PDBsum" id="5JVG"/>
<dbReference type="PDBsum" id="5JVH"/>
<dbReference type="PDBsum" id="7A0R"/>
<dbReference type="PDBsum" id="7A0S"/>
<dbReference type="PDBsum" id="7A18"/>
<dbReference type="SMR" id="Q9RSL0"/>
<dbReference type="FunCoup" id="Q9RSL0">
    <property type="interactions" value="276"/>
</dbReference>
<dbReference type="IntAct" id="Q9RSL0">
    <property type="interactions" value="1"/>
</dbReference>
<dbReference type="STRING" id="243230.DR_2114"/>
<dbReference type="PaxDb" id="243230-DR_2114"/>
<dbReference type="EnsemblBacteria" id="AAF11663">
    <property type="protein sequence ID" value="AAF11663"/>
    <property type="gene ID" value="DR_2114"/>
</dbReference>
<dbReference type="GeneID" id="69518356"/>
<dbReference type="KEGG" id="dra:DR_2114"/>
<dbReference type="PATRIC" id="fig|243230.17.peg.2337"/>
<dbReference type="eggNOG" id="COG1841">
    <property type="taxonomic scope" value="Bacteria"/>
</dbReference>
<dbReference type="HOGENOM" id="CLU_131047_2_1_0"/>
<dbReference type="InParanoid" id="Q9RSL0"/>
<dbReference type="OrthoDB" id="9812790at2"/>
<dbReference type="EvolutionaryTrace" id="Q9RSL0"/>
<dbReference type="Proteomes" id="UP000002524">
    <property type="component" value="Chromosome 1"/>
</dbReference>
<dbReference type="GO" id="GO:0022625">
    <property type="term" value="C:cytosolic large ribosomal subunit"/>
    <property type="evidence" value="ECO:0000318"/>
    <property type="project" value="GO_Central"/>
</dbReference>
<dbReference type="GO" id="GO:0019843">
    <property type="term" value="F:rRNA binding"/>
    <property type="evidence" value="ECO:0007669"/>
    <property type="project" value="UniProtKB-KW"/>
</dbReference>
<dbReference type="GO" id="GO:0003735">
    <property type="term" value="F:structural constituent of ribosome"/>
    <property type="evidence" value="ECO:0007669"/>
    <property type="project" value="InterPro"/>
</dbReference>
<dbReference type="GO" id="GO:0006412">
    <property type="term" value="P:translation"/>
    <property type="evidence" value="ECO:0007669"/>
    <property type="project" value="UniProtKB-UniRule"/>
</dbReference>
<dbReference type="CDD" id="cd01658">
    <property type="entry name" value="Ribosomal_L30"/>
    <property type="match status" value="1"/>
</dbReference>
<dbReference type="FunFam" id="3.30.1390.20:FF:000001">
    <property type="entry name" value="50S ribosomal protein L30"/>
    <property type="match status" value="1"/>
</dbReference>
<dbReference type="Gene3D" id="3.30.1390.20">
    <property type="entry name" value="Ribosomal protein L30, ferredoxin-like fold domain"/>
    <property type="match status" value="1"/>
</dbReference>
<dbReference type="HAMAP" id="MF_01371_B">
    <property type="entry name" value="Ribosomal_uL30_B"/>
    <property type="match status" value="1"/>
</dbReference>
<dbReference type="InterPro" id="IPR036919">
    <property type="entry name" value="Ribo_uL30_ferredoxin-like_sf"/>
</dbReference>
<dbReference type="InterPro" id="IPR005996">
    <property type="entry name" value="Ribosomal_uL30_bac-type"/>
</dbReference>
<dbReference type="InterPro" id="IPR016082">
    <property type="entry name" value="Ribosomal_uL30_ferredoxin-like"/>
</dbReference>
<dbReference type="NCBIfam" id="TIGR01308">
    <property type="entry name" value="rpmD_bact"/>
    <property type="match status" value="1"/>
</dbReference>
<dbReference type="PANTHER" id="PTHR15892:SF2">
    <property type="entry name" value="LARGE RIBOSOMAL SUBUNIT PROTEIN UL30M"/>
    <property type="match status" value="1"/>
</dbReference>
<dbReference type="PANTHER" id="PTHR15892">
    <property type="entry name" value="MITOCHONDRIAL RIBOSOMAL PROTEIN L30"/>
    <property type="match status" value="1"/>
</dbReference>
<dbReference type="Pfam" id="PF00327">
    <property type="entry name" value="Ribosomal_L30"/>
    <property type="match status" value="1"/>
</dbReference>
<dbReference type="PIRSF" id="PIRSF002211">
    <property type="entry name" value="Ribosomal_L30_bac-type"/>
    <property type="match status" value="1"/>
</dbReference>
<dbReference type="SUPFAM" id="SSF55129">
    <property type="entry name" value="Ribosomal protein L30p/L7e"/>
    <property type="match status" value="1"/>
</dbReference>
<sequence length="55" mass="6067">MKIKLVRSVIGRPGNQVKTVQALGLRKIGDSREVSDTPAVRGMVKTVKHLLEVQE</sequence>
<name>RL30_DEIRA</name>
<keyword id="KW-0002">3D-structure</keyword>
<keyword id="KW-0903">Direct protein sequencing</keyword>
<keyword id="KW-1185">Reference proteome</keyword>
<keyword id="KW-0687">Ribonucleoprotein</keyword>
<keyword id="KW-0689">Ribosomal protein</keyword>
<keyword id="KW-0694">RNA-binding</keyword>
<keyword id="KW-0699">rRNA-binding</keyword>
<evidence type="ECO:0000255" key="1">
    <source>
        <dbReference type="HAMAP-Rule" id="MF_01371"/>
    </source>
</evidence>
<evidence type="ECO:0000269" key="2">
    <source>
    </source>
</evidence>
<evidence type="ECO:0000269" key="3">
    <source>
    </source>
</evidence>
<evidence type="ECO:0000269" key="4">
    <source>
    </source>
</evidence>
<evidence type="ECO:0000269" key="5">
    <source>
    </source>
</evidence>
<evidence type="ECO:0000269" key="6">
    <source>
    </source>
</evidence>
<evidence type="ECO:0000269" key="7">
    <source>
    </source>
</evidence>
<evidence type="ECO:0000305" key="8"/>
<evidence type="ECO:0007829" key="9">
    <source>
        <dbReference type="PDB" id="5DM6"/>
    </source>
</evidence>
<proteinExistence type="evidence at protein level"/>
<reference key="1">
    <citation type="journal article" date="1999" name="Science">
        <title>Genome sequence of the radioresistant bacterium Deinococcus radiodurans R1.</title>
        <authorList>
            <person name="White O."/>
            <person name="Eisen J.A."/>
            <person name="Heidelberg J.F."/>
            <person name="Hickey E.K."/>
            <person name="Peterson J.D."/>
            <person name="Dodson R.J."/>
            <person name="Haft D.H."/>
            <person name="Gwinn M.L."/>
            <person name="Nelson W.C."/>
            <person name="Richardson D.L."/>
            <person name="Moffat K.S."/>
            <person name="Qin H."/>
            <person name="Jiang L."/>
            <person name="Pamphile W."/>
            <person name="Crosby M."/>
            <person name="Shen M."/>
            <person name="Vamathevan J.J."/>
            <person name="Lam P."/>
            <person name="McDonald L.A."/>
            <person name="Utterback T.R."/>
            <person name="Zalewski C."/>
            <person name="Makarova K.S."/>
            <person name="Aravind L."/>
            <person name="Daly M.J."/>
            <person name="Minton K.W."/>
            <person name="Fleischmann R.D."/>
            <person name="Ketchum K.A."/>
            <person name="Nelson K.E."/>
            <person name="Salzberg S.L."/>
            <person name="Smith H.O."/>
            <person name="Venter J.C."/>
            <person name="Fraser C.M."/>
        </authorList>
    </citation>
    <scope>NUCLEOTIDE SEQUENCE [LARGE SCALE GENOMIC DNA]</scope>
    <source>
        <strain>ATCC 13939 / DSM 20539 / JCM 16871 / CCUG 27074 / LMG 4051 / NBRC 15346 / NCIMB 9279 / VKM B-1422 / R1</strain>
    </source>
</reference>
<reference key="2">
    <citation type="journal article" date="2001" name="Cell">
        <title>High resolution structure of the large ribosomal subunit from a mesophilic eubacterium.</title>
        <authorList>
            <person name="Harms J."/>
            <person name="Schluenzen F."/>
            <person name="Zarivach R."/>
            <person name="Bashan A."/>
            <person name="Gat S."/>
            <person name="Agmon I."/>
            <person name="Bartels H."/>
            <person name="Franceschi F."/>
            <person name="Yonath A."/>
        </authorList>
    </citation>
    <scope>PROTEIN SEQUENCE OF 1-5</scope>
    <scope>X-RAY CRYSTALLOGRAPHY (3.1 ANGSTROMS) OF THE 50S SUBUNIT</scope>
    <source>
        <strain>ATCC 13939 / DSM 20539 / JCM 16871 / CCUG 27074 / LMG 4051 / NBRC 15346 / NCIMB 9279 / VKM B-1422 / R1</strain>
    </source>
</reference>
<reference key="3">
    <citation type="journal article" date="2001" name="Nature">
        <title>Structural basis for the interaction of antibiotics with the peptidyl transferase centre in eubacteria.</title>
        <authorList>
            <person name="Schluenzen F."/>
            <person name="Zarivach R."/>
            <person name="Harms J."/>
            <person name="Bashan A."/>
            <person name="Tocilj A."/>
            <person name="Albrecht R."/>
            <person name="Yonath A."/>
            <person name="Franceschi F."/>
        </authorList>
    </citation>
    <scope>X-RAY CRYSTALLOGRAPHY (3.1 ANGSTROMS) OF THE 50S SUBUNIT IN COMPLEX WITH FIVE ANTIBIOTICS</scope>
    <source>
        <strain>ATCC 13939 / DSM 20539 / JCM 16871 / CCUG 27074 / LMG 4051 / NBRC 15346 / NCIMB 9279 / VKM B-1422 / R1</strain>
    </source>
</reference>
<reference key="4">
    <citation type="journal article" date="2003" name="Mol. Cell">
        <title>Structural basis of the ribosomal machinery for peptide bond formation, translocation, and nascent chain progression.</title>
        <authorList>
            <person name="Bashan A."/>
            <person name="Agmon I."/>
            <person name="Zarivach R."/>
            <person name="Schluenzen F."/>
            <person name="Harms J."/>
            <person name="Berisio R."/>
            <person name="Bartels H."/>
            <person name="Franceschi F."/>
            <person name="Auerbach T."/>
            <person name="Hansen H.A."/>
            <person name="Kossoy E."/>
            <person name="Kessler M."/>
            <person name="Yonath A."/>
        </authorList>
    </citation>
    <scope>X-RAY CRYSTALLOGRAPHY (3.5 ANGSTROMS) OF THE 50S SUBUNIT IN COMPLEX WITH TRNA MIMICS</scope>
    <source>
        <strain>ATCC 13939 / DSM 20539 / JCM 16871 / CCUG 27074 / LMG 4051 / NBRC 15346 / NCIMB 9279 / VKM B-1422 / R1</strain>
    </source>
</reference>
<reference key="5">
    <citation type="journal article" date="2003" name="Structure">
        <title>Structural basis for the antibiotic activity of ketolides and azalides.</title>
        <authorList>
            <person name="Schluenzen F."/>
            <person name="Harms J.M."/>
            <person name="Franceschi F."/>
            <person name="Hansen H.A."/>
            <person name="Bartels H."/>
            <person name="Zarivach R."/>
            <person name="Yonath A."/>
        </authorList>
    </citation>
    <scope>X-RAY CRYSTALLOGRAPHY (3.3 ANGSTROMS) OF THE 50S SUBUNIT IN COMPLEX WITH MODIFIED MACROLIDE ANTIBIOTICS</scope>
    <source>
        <strain>ATCC 13939 / DSM 20539 / JCM 16871 / CCUG 27074 / LMG 4051 / NBRC 15346 / NCIMB 9279 / VKM B-1422 / R1</strain>
    </source>
</reference>
<reference key="6">
    <citation type="journal article" date="2003" name="Nat. Struct. Biol.">
        <title>Structural insight into the role of the ribosomal tunnel in cellular regulation.</title>
        <authorList>
            <person name="Berisio R."/>
            <person name="Schluenzen F."/>
            <person name="Harms J."/>
            <person name="Bashan A."/>
            <person name="Auerbach T."/>
            <person name="Baram D."/>
            <person name="Yonath A."/>
        </authorList>
    </citation>
    <scope>X-RAY CRYSTALLOGRAPHY (3.4 ANGSTROMS) OF THE 50S SUBUNIT IN COMPLEX WITH TROLEANDOMYCIN</scope>
    <source>
        <strain>ATCC 13939 / DSM 20539 / JCM 16871 / CCUG 27074 / LMG 4051 / NBRC 15346 / NCIMB 9279 / VKM B-1422 / R1</strain>
    </source>
</reference>
<reference key="7">
    <citation type="journal article" date="2004" name="BMC Biol.">
        <title>Alterations at the peptidyl transferase centre of the ribosome induced by the synergistic action of the streptogramins dalfopristin and quinupristin.</title>
        <authorList>
            <person name="Harms J.M."/>
            <person name="Schluenzen F."/>
            <person name="Fucini P."/>
            <person name="Bartels H."/>
            <person name="Yonath A."/>
        </authorList>
    </citation>
    <scope>X-RAY CRYSTALLOGRAPHY (3.4 ANGSTROMS) OF THE 50S SUBUNIT IN COMPLEX WITH THE STREPTOGRAMINS QUINUPRISTIN AND DALFOPRISTIN</scope>
    <source>
        <strain>ATCC 13939 / DSM 20539 / JCM 16871 / CCUG 27074 / LMG 4051 / NBRC 15346 / NCIMB 9279 / VKM B-1422 / R1</strain>
    </source>
</reference>
<reference key="8">
    <citation type="journal article" date="2004" name="Mol. Microbiol.">
        <title>Inhibition of peptide bond formation by pleuromutilins: the structure of the 50S ribosomal subunit from Deinococcus radiodurans in complex with tiamulin.</title>
        <authorList>
            <person name="Schluenzen F."/>
            <person name="Pyetan E."/>
            <person name="Fucini P."/>
            <person name="Yonath A."/>
            <person name="Harms J.M."/>
        </authorList>
    </citation>
    <scope>X-RAY CRYSTALLOGRAPHY (3.5 ANGSTROMS) OF THE 50S SUBUNIT IN COMPLEX WITH TIAMULIN</scope>
    <source>
        <strain>ATCC 13939 / DSM 20539 / JCM 16871 / CCUG 27074 / LMG 4051 / NBRC 15346 / NCIMB 9279 / VKM B-1422 / R1</strain>
    </source>
</reference>
<protein>
    <recommendedName>
        <fullName evidence="1">Large ribosomal subunit protein uL30</fullName>
    </recommendedName>
    <alternativeName>
        <fullName evidence="8">50S ribosomal protein L30</fullName>
    </alternativeName>
</protein>
<comment type="function">
    <text>Binds the 5S and 23S rRNAs.</text>
</comment>
<comment type="subunit">
    <text evidence="1 2 3 4 5 6 7">Part of the 50S ribosomal subunit.</text>
</comment>
<comment type="similarity">
    <text evidence="1">Belongs to the universal ribosomal protein uL30 family.</text>
</comment>
<organism>
    <name type="scientific">Deinococcus radiodurans (strain ATCC 13939 / DSM 20539 / JCM 16871 / CCUG 27074 / LMG 4051 / NBRC 15346 / NCIMB 9279 / VKM B-1422 / R1)</name>
    <dbReference type="NCBI Taxonomy" id="243230"/>
    <lineage>
        <taxon>Bacteria</taxon>
        <taxon>Thermotogati</taxon>
        <taxon>Deinococcota</taxon>
        <taxon>Deinococci</taxon>
        <taxon>Deinococcales</taxon>
        <taxon>Deinococcaceae</taxon>
        <taxon>Deinococcus</taxon>
    </lineage>
</organism>
<gene>
    <name evidence="1" type="primary">rpmD</name>
    <name type="ordered locus">DR_2114</name>
</gene>